<dbReference type="EC" id="2.7.1.16" evidence="1"/>
<dbReference type="EMBL" id="AL590842">
    <property type="protein sequence ID" value="CAL20881.1"/>
    <property type="status" value="ALT_INIT"/>
    <property type="molecule type" value="Genomic_DNA"/>
</dbReference>
<dbReference type="EMBL" id="AE009952">
    <property type="protein sequence ID" value="AAM85658.1"/>
    <property type="status" value="ALT_INIT"/>
    <property type="molecule type" value="Genomic_DNA"/>
</dbReference>
<dbReference type="EMBL" id="AE017042">
    <property type="protein sequence ID" value="AAS62264.1"/>
    <property type="status" value="ALT_INIT"/>
    <property type="molecule type" value="Genomic_DNA"/>
</dbReference>
<dbReference type="PIR" id="AF0274">
    <property type="entry name" value="AF0274"/>
</dbReference>
<dbReference type="RefSeq" id="YP_002347221.1">
    <property type="nucleotide sequence ID" value="NC_003143.1"/>
</dbReference>
<dbReference type="SMR" id="P58543"/>
<dbReference type="IntAct" id="P58543">
    <property type="interactions" value="6"/>
</dbReference>
<dbReference type="STRING" id="214092.YPO2254"/>
<dbReference type="PaxDb" id="214092-YPO2254"/>
<dbReference type="DNASU" id="1147042"/>
<dbReference type="EnsemblBacteria" id="AAS62264">
    <property type="protein sequence ID" value="AAS62264"/>
    <property type="gene ID" value="YP_2050"/>
</dbReference>
<dbReference type="KEGG" id="ype:YPO2254"/>
<dbReference type="KEGG" id="ypk:y2095"/>
<dbReference type="KEGG" id="ypm:YP_2050"/>
<dbReference type="PATRIC" id="fig|214092.21.peg.2650"/>
<dbReference type="eggNOG" id="COG1069">
    <property type="taxonomic scope" value="Bacteria"/>
</dbReference>
<dbReference type="HOGENOM" id="CLU_009281_9_1_6"/>
<dbReference type="UniPathway" id="UPA00145">
    <property type="reaction ID" value="UER00566"/>
</dbReference>
<dbReference type="Proteomes" id="UP000000815">
    <property type="component" value="Chromosome"/>
</dbReference>
<dbReference type="Proteomes" id="UP000001019">
    <property type="component" value="Chromosome"/>
</dbReference>
<dbReference type="Proteomes" id="UP000002490">
    <property type="component" value="Chromosome"/>
</dbReference>
<dbReference type="GO" id="GO:0005737">
    <property type="term" value="C:cytoplasm"/>
    <property type="evidence" value="ECO:0000318"/>
    <property type="project" value="GO_Central"/>
</dbReference>
<dbReference type="GO" id="GO:0005524">
    <property type="term" value="F:ATP binding"/>
    <property type="evidence" value="ECO:0007669"/>
    <property type="project" value="UniProtKB-KW"/>
</dbReference>
<dbReference type="GO" id="GO:0019150">
    <property type="term" value="F:D-ribulokinase activity"/>
    <property type="evidence" value="ECO:0000318"/>
    <property type="project" value="GO_Central"/>
</dbReference>
<dbReference type="GO" id="GO:0008741">
    <property type="term" value="F:ribulokinase activity"/>
    <property type="evidence" value="ECO:0007669"/>
    <property type="project" value="UniProtKB-UniRule"/>
</dbReference>
<dbReference type="GO" id="GO:0019569">
    <property type="term" value="P:L-arabinose catabolic process to xylulose 5-phosphate"/>
    <property type="evidence" value="ECO:0007669"/>
    <property type="project" value="UniProtKB-UniRule"/>
</dbReference>
<dbReference type="GO" id="GO:0019321">
    <property type="term" value="P:pentose metabolic process"/>
    <property type="evidence" value="ECO:0000318"/>
    <property type="project" value="GO_Central"/>
</dbReference>
<dbReference type="CDD" id="cd07781">
    <property type="entry name" value="ASKHA_NBD_FGGY_L-RBK"/>
    <property type="match status" value="1"/>
</dbReference>
<dbReference type="Gene3D" id="1.20.58.2240">
    <property type="match status" value="1"/>
</dbReference>
<dbReference type="Gene3D" id="3.30.420.40">
    <property type="match status" value="1"/>
</dbReference>
<dbReference type="HAMAP" id="MF_00520">
    <property type="entry name" value="Ribulokinase"/>
    <property type="match status" value="1"/>
</dbReference>
<dbReference type="InterPro" id="IPR043129">
    <property type="entry name" value="ATPase_NBD"/>
</dbReference>
<dbReference type="InterPro" id="IPR018485">
    <property type="entry name" value="FGGY_C"/>
</dbReference>
<dbReference type="InterPro" id="IPR005929">
    <property type="entry name" value="Ribulokinase"/>
</dbReference>
<dbReference type="NCBIfam" id="TIGR01234">
    <property type="entry name" value="L-ribulokinase"/>
    <property type="match status" value="1"/>
</dbReference>
<dbReference type="NCBIfam" id="NF003154">
    <property type="entry name" value="PRK04123.1"/>
    <property type="match status" value="1"/>
</dbReference>
<dbReference type="PANTHER" id="PTHR43435:SF4">
    <property type="entry name" value="FGGY CARBOHYDRATE KINASE DOMAIN-CONTAINING PROTEIN"/>
    <property type="match status" value="1"/>
</dbReference>
<dbReference type="PANTHER" id="PTHR43435">
    <property type="entry name" value="RIBULOKINASE"/>
    <property type="match status" value="1"/>
</dbReference>
<dbReference type="Pfam" id="PF02782">
    <property type="entry name" value="FGGY_C"/>
    <property type="match status" value="1"/>
</dbReference>
<dbReference type="SUPFAM" id="SSF53067">
    <property type="entry name" value="Actin-like ATPase domain"/>
    <property type="match status" value="2"/>
</dbReference>
<sequence length="563" mass="61833">MISADGAIALGLDFGSDSVRVLAVDCQHGTEIDTEVVYYPRWKKGLYCQAAQNQFRHHPLDYIEAMEQAIRQMVKRLSEEQRQHIVGIGVDSTGSTPAPIDEQGQVLALRPDFADNPNAMFVLWKDHTAIEEAEEINRLCRSGEFADYSRYIGGVYSSEWFWAKILHVTRADVAVREAAVSWIELCDWVPALLSGTTAPQDIQRGRCSAGHKSLWHPSWGGLPPRAFLAALDTSLVNDLDYPMFTDTYTAERPVGQITAEWAERLGLPTTVILSGGAFDCHMGAVGAGAQPYTLVKVIGTSTCDILIADDQRVGDRAIAGICGQVEGSVLPGWIGMEAGQSAFGDMYAWFSNLLSWPLHQAALTQPEWQPQLKQIESNLLASLTRAWAQNPSLDHLPVVLDWFNGRRTPNANQRLKGVITDLNLGTDAPTLFGGFIAATAFGARAIMECFEQQDIPIDNVLALGGIARKSPVIMQVCADVMNRPLQIVASDQCCALGAAIFAAVAAGAHDDVPTAQRHMACNIERTLIPDPVQVVRYQQLYQRYQQWCHTAEPHYAPVTKVIH</sequence>
<reference key="1">
    <citation type="journal article" date="2001" name="Nature">
        <title>Genome sequence of Yersinia pestis, the causative agent of plague.</title>
        <authorList>
            <person name="Parkhill J."/>
            <person name="Wren B.W."/>
            <person name="Thomson N.R."/>
            <person name="Titball R.W."/>
            <person name="Holden M.T.G."/>
            <person name="Prentice M.B."/>
            <person name="Sebaihia M."/>
            <person name="James K.D."/>
            <person name="Churcher C.M."/>
            <person name="Mungall K.L."/>
            <person name="Baker S."/>
            <person name="Basham D."/>
            <person name="Bentley S.D."/>
            <person name="Brooks K."/>
            <person name="Cerdeno-Tarraga A.-M."/>
            <person name="Chillingworth T."/>
            <person name="Cronin A."/>
            <person name="Davies R.M."/>
            <person name="Davis P."/>
            <person name="Dougan G."/>
            <person name="Feltwell T."/>
            <person name="Hamlin N."/>
            <person name="Holroyd S."/>
            <person name="Jagels K."/>
            <person name="Karlyshev A.V."/>
            <person name="Leather S."/>
            <person name="Moule S."/>
            <person name="Oyston P.C.F."/>
            <person name="Quail M.A."/>
            <person name="Rutherford K.M."/>
            <person name="Simmonds M."/>
            <person name="Skelton J."/>
            <person name="Stevens K."/>
            <person name="Whitehead S."/>
            <person name="Barrell B.G."/>
        </authorList>
    </citation>
    <scope>NUCLEOTIDE SEQUENCE [LARGE SCALE GENOMIC DNA]</scope>
    <source>
        <strain>CO-92 / Biovar Orientalis</strain>
    </source>
</reference>
<reference key="2">
    <citation type="journal article" date="2002" name="J. Bacteriol.">
        <title>Genome sequence of Yersinia pestis KIM.</title>
        <authorList>
            <person name="Deng W."/>
            <person name="Burland V."/>
            <person name="Plunkett G. III"/>
            <person name="Boutin A."/>
            <person name="Mayhew G.F."/>
            <person name="Liss P."/>
            <person name="Perna N.T."/>
            <person name="Rose D.J."/>
            <person name="Mau B."/>
            <person name="Zhou S."/>
            <person name="Schwartz D.C."/>
            <person name="Fetherston J.D."/>
            <person name="Lindler L.E."/>
            <person name="Brubaker R.R."/>
            <person name="Plano G.V."/>
            <person name="Straley S.C."/>
            <person name="McDonough K.A."/>
            <person name="Nilles M.L."/>
            <person name="Matson J.S."/>
            <person name="Blattner F.R."/>
            <person name="Perry R.D."/>
        </authorList>
    </citation>
    <scope>NUCLEOTIDE SEQUENCE [LARGE SCALE GENOMIC DNA]</scope>
    <source>
        <strain>KIM10+ / Biovar Mediaevalis</strain>
    </source>
</reference>
<reference key="3">
    <citation type="journal article" date="2004" name="DNA Res.">
        <title>Complete genome sequence of Yersinia pestis strain 91001, an isolate avirulent to humans.</title>
        <authorList>
            <person name="Song Y."/>
            <person name="Tong Z."/>
            <person name="Wang J."/>
            <person name="Wang L."/>
            <person name="Guo Z."/>
            <person name="Han Y."/>
            <person name="Zhang J."/>
            <person name="Pei D."/>
            <person name="Zhou D."/>
            <person name="Qin H."/>
            <person name="Pang X."/>
            <person name="Han Y."/>
            <person name="Zhai J."/>
            <person name="Li M."/>
            <person name="Cui B."/>
            <person name="Qi Z."/>
            <person name="Jin L."/>
            <person name="Dai R."/>
            <person name="Chen F."/>
            <person name="Li S."/>
            <person name="Ye C."/>
            <person name="Du Z."/>
            <person name="Lin W."/>
            <person name="Wang J."/>
            <person name="Yu J."/>
            <person name="Yang H."/>
            <person name="Wang J."/>
            <person name="Huang P."/>
            <person name="Yang R."/>
        </authorList>
    </citation>
    <scope>NUCLEOTIDE SEQUENCE [LARGE SCALE GENOMIC DNA]</scope>
    <source>
        <strain>91001 / Biovar Mediaevalis</strain>
    </source>
</reference>
<keyword id="KW-0054">Arabinose catabolism</keyword>
<keyword id="KW-0067">ATP-binding</keyword>
<keyword id="KW-0119">Carbohydrate metabolism</keyword>
<keyword id="KW-0418">Kinase</keyword>
<keyword id="KW-0547">Nucleotide-binding</keyword>
<keyword id="KW-1185">Reference proteome</keyword>
<keyword id="KW-0808">Transferase</keyword>
<gene>
    <name evidence="1" type="primary">araB</name>
    <name type="ordered locus">YPO2254</name>
    <name type="ordered locus">y2095</name>
    <name type="ordered locus">YP_2050</name>
</gene>
<feature type="chain" id="PRO_0000198377" description="Ribulokinase">
    <location>
        <begin position="1"/>
        <end position="563"/>
    </location>
</feature>
<accession>P58543</accession>
<accession>Q0WER7</accession>
<comment type="catalytic activity">
    <reaction evidence="1">
        <text>D-ribulose + ATP = D-ribulose 5-phosphate + ADP + H(+)</text>
        <dbReference type="Rhea" id="RHEA:17601"/>
        <dbReference type="ChEBI" id="CHEBI:15378"/>
        <dbReference type="ChEBI" id="CHEBI:17173"/>
        <dbReference type="ChEBI" id="CHEBI:30616"/>
        <dbReference type="ChEBI" id="CHEBI:58121"/>
        <dbReference type="ChEBI" id="CHEBI:456216"/>
        <dbReference type="EC" id="2.7.1.16"/>
    </reaction>
</comment>
<comment type="catalytic activity">
    <reaction evidence="1">
        <text>L-ribulose + ATP = L-ribulose 5-phosphate + ADP + H(+)</text>
        <dbReference type="Rhea" id="RHEA:22072"/>
        <dbReference type="ChEBI" id="CHEBI:15378"/>
        <dbReference type="ChEBI" id="CHEBI:16880"/>
        <dbReference type="ChEBI" id="CHEBI:30616"/>
        <dbReference type="ChEBI" id="CHEBI:58226"/>
        <dbReference type="ChEBI" id="CHEBI:456216"/>
        <dbReference type="EC" id="2.7.1.16"/>
    </reaction>
</comment>
<comment type="pathway">
    <text evidence="1">Carbohydrate degradation; L-arabinose degradation via L-ribulose; D-xylulose 5-phosphate from L-arabinose (bacterial route): step 2/3.</text>
</comment>
<comment type="similarity">
    <text evidence="1">Belongs to the ribulokinase family.</text>
</comment>
<comment type="sequence caution" evidence="2">
    <conflict type="erroneous initiation">
        <sequence resource="EMBL-CDS" id="AAM85658"/>
    </conflict>
</comment>
<comment type="sequence caution" evidence="2">
    <conflict type="erroneous initiation">
        <sequence resource="EMBL-CDS" id="AAS62264"/>
    </conflict>
</comment>
<comment type="sequence caution" evidence="2">
    <conflict type="erroneous initiation">
        <sequence resource="EMBL-CDS" id="CAL20881"/>
    </conflict>
</comment>
<protein>
    <recommendedName>
        <fullName evidence="1">Ribulokinase</fullName>
        <ecNumber evidence="1">2.7.1.16</ecNumber>
    </recommendedName>
</protein>
<evidence type="ECO:0000255" key="1">
    <source>
        <dbReference type="HAMAP-Rule" id="MF_00520"/>
    </source>
</evidence>
<evidence type="ECO:0000305" key="2"/>
<organism>
    <name type="scientific">Yersinia pestis</name>
    <dbReference type="NCBI Taxonomy" id="632"/>
    <lineage>
        <taxon>Bacteria</taxon>
        <taxon>Pseudomonadati</taxon>
        <taxon>Pseudomonadota</taxon>
        <taxon>Gammaproteobacteria</taxon>
        <taxon>Enterobacterales</taxon>
        <taxon>Yersiniaceae</taxon>
        <taxon>Yersinia</taxon>
    </lineage>
</organism>
<name>ARAB_YERPE</name>
<proteinExistence type="inferred from homology"/>